<feature type="chain" id="PRO_0000377137" description="tRNA dimethylallyltransferase">
    <location>
        <begin position="1"/>
        <end position="325"/>
    </location>
</feature>
<feature type="region of interest" description="Interaction with substrate tRNA" evidence="1">
    <location>
        <begin position="50"/>
        <end position="53"/>
    </location>
</feature>
<feature type="binding site" evidence="1">
    <location>
        <begin position="25"/>
        <end position="32"/>
    </location>
    <ligand>
        <name>ATP</name>
        <dbReference type="ChEBI" id="CHEBI:30616"/>
    </ligand>
</feature>
<feature type="binding site" evidence="1">
    <location>
        <begin position="27"/>
        <end position="32"/>
    </location>
    <ligand>
        <name>substrate</name>
    </ligand>
</feature>
<feature type="site" description="Interaction with substrate tRNA" evidence="1">
    <location>
        <position position="116"/>
    </location>
</feature>
<feature type="site" description="Interaction with substrate tRNA" evidence="1">
    <location>
        <position position="139"/>
    </location>
</feature>
<keyword id="KW-0067">ATP-binding</keyword>
<keyword id="KW-0460">Magnesium</keyword>
<keyword id="KW-0547">Nucleotide-binding</keyword>
<keyword id="KW-0808">Transferase</keyword>
<keyword id="KW-0819">tRNA processing</keyword>
<sequence>MKRTDSTAKATAPNPPLAPLLVILGNTGSGKSALALKLAREIPAGIVNADSRQIYSQMDIATAKPTPAEMSEIPHYLYSFIQPDQPFSLAEYQSLAYQAINKLHTQNRLPILVGGSGQYLKAVLEGWSIPQIAPDETFRAAMFEKAEKEGGASIFAELVKQDPQAAAKIDPRNIRRVVRALEVINKTGAEFSKLQTKNPPPYRVLKIGIHLAREELYRTVDLRVGKMLEQGLEAEVRHLLEQGYAATLPSMSGIGYRQIAKYIGGEISLSEAIEQMQFETHRLIRQQNTYFRLADPDIHWITLEESMDSGIINLVRNFLADGGKE</sequence>
<proteinExistence type="inferred from homology"/>
<protein>
    <recommendedName>
        <fullName evidence="1">tRNA dimethylallyltransferase</fullName>
        <ecNumber evidence="1">2.5.1.75</ecNumber>
    </recommendedName>
    <alternativeName>
        <fullName evidence="1">Dimethylallyl diphosphate:tRNA dimethylallyltransferase</fullName>
        <shortName evidence="1">DMAPP:tRNA dimethylallyltransferase</shortName>
        <shortName evidence="1">DMATase</shortName>
    </alternativeName>
    <alternativeName>
        <fullName evidence="1">Isopentenyl-diphosphate:tRNA isopentenyltransferase</fullName>
        <shortName evidence="1">IPP transferase</shortName>
        <shortName evidence="1">IPPT</shortName>
        <shortName evidence="1">IPTase</shortName>
    </alternativeName>
</protein>
<reference key="1">
    <citation type="journal article" date="2005" name="Science">
        <title>Genome sequence of the PCE-dechlorinating bacterium Dehalococcoides ethenogenes.</title>
        <authorList>
            <person name="Seshadri R."/>
            <person name="Adrian L."/>
            <person name="Fouts D.E."/>
            <person name="Eisen J.A."/>
            <person name="Phillippy A.M."/>
            <person name="Methe B.A."/>
            <person name="Ward N.L."/>
            <person name="Nelson W.C."/>
            <person name="DeBoy R.T."/>
            <person name="Khouri H.M."/>
            <person name="Kolonay J.F."/>
            <person name="Dodson R.J."/>
            <person name="Daugherty S.C."/>
            <person name="Brinkac L.M."/>
            <person name="Sullivan S.A."/>
            <person name="Madupu R."/>
            <person name="Nelson K.E."/>
            <person name="Kang K.H."/>
            <person name="Impraim M."/>
            <person name="Tran K."/>
            <person name="Robinson J.M."/>
            <person name="Forberger H.A."/>
            <person name="Fraser C.M."/>
            <person name="Zinder S.H."/>
            <person name="Heidelberg J.F."/>
        </authorList>
    </citation>
    <scope>NUCLEOTIDE SEQUENCE [LARGE SCALE GENOMIC DNA]</scope>
    <source>
        <strain>ATCC BAA-2266 / KCTC 15142 / 195</strain>
    </source>
</reference>
<evidence type="ECO:0000255" key="1">
    <source>
        <dbReference type="HAMAP-Rule" id="MF_00185"/>
    </source>
</evidence>
<organism>
    <name type="scientific">Dehalococcoides mccartyi (strain ATCC BAA-2266 / KCTC 15142 / 195)</name>
    <name type="common">Dehalococcoides ethenogenes (strain 195)</name>
    <dbReference type="NCBI Taxonomy" id="243164"/>
    <lineage>
        <taxon>Bacteria</taxon>
        <taxon>Bacillati</taxon>
        <taxon>Chloroflexota</taxon>
        <taxon>Dehalococcoidia</taxon>
        <taxon>Dehalococcoidales</taxon>
        <taxon>Dehalococcoidaceae</taxon>
        <taxon>Dehalococcoides</taxon>
    </lineage>
</organism>
<name>MIAA_DEHM1</name>
<comment type="function">
    <text evidence="1">Catalyzes the transfer of a dimethylallyl group onto the adenine at position 37 in tRNAs that read codons beginning with uridine, leading to the formation of N6-(dimethylallyl)adenosine (i(6)A).</text>
</comment>
<comment type="catalytic activity">
    <reaction evidence="1">
        <text>adenosine(37) in tRNA + dimethylallyl diphosphate = N(6)-dimethylallyladenosine(37) in tRNA + diphosphate</text>
        <dbReference type="Rhea" id="RHEA:26482"/>
        <dbReference type="Rhea" id="RHEA-COMP:10162"/>
        <dbReference type="Rhea" id="RHEA-COMP:10375"/>
        <dbReference type="ChEBI" id="CHEBI:33019"/>
        <dbReference type="ChEBI" id="CHEBI:57623"/>
        <dbReference type="ChEBI" id="CHEBI:74411"/>
        <dbReference type="ChEBI" id="CHEBI:74415"/>
        <dbReference type="EC" id="2.5.1.75"/>
    </reaction>
</comment>
<comment type="cofactor">
    <cofactor evidence="1">
        <name>Mg(2+)</name>
        <dbReference type="ChEBI" id="CHEBI:18420"/>
    </cofactor>
</comment>
<comment type="subunit">
    <text evidence="1">Monomer.</text>
</comment>
<comment type="similarity">
    <text evidence="1">Belongs to the IPP transferase family.</text>
</comment>
<dbReference type="EC" id="2.5.1.75" evidence="1"/>
<dbReference type="EMBL" id="CP000027">
    <property type="protein sequence ID" value="AAW39996.1"/>
    <property type="molecule type" value="Genomic_DNA"/>
</dbReference>
<dbReference type="RefSeq" id="WP_010936477.1">
    <property type="nucleotide sequence ID" value="NC_002936.3"/>
</dbReference>
<dbReference type="SMR" id="Q3Z8H3"/>
<dbReference type="FunCoup" id="Q3Z8H3">
    <property type="interactions" value="334"/>
</dbReference>
<dbReference type="STRING" id="243164.DET0741"/>
<dbReference type="GeneID" id="3229958"/>
<dbReference type="KEGG" id="det:DET0741"/>
<dbReference type="PATRIC" id="fig|243164.10.peg.709"/>
<dbReference type="eggNOG" id="COG0324">
    <property type="taxonomic scope" value="Bacteria"/>
</dbReference>
<dbReference type="HOGENOM" id="CLU_032616_0_1_0"/>
<dbReference type="InParanoid" id="Q3Z8H3"/>
<dbReference type="Proteomes" id="UP000008289">
    <property type="component" value="Chromosome"/>
</dbReference>
<dbReference type="GO" id="GO:0005524">
    <property type="term" value="F:ATP binding"/>
    <property type="evidence" value="ECO:0007669"/>
    <property type="project" value="UniProtKB-UniRule"/>
</dbReference>
<dbReference type="GO" id="GO:0052381">
    <property type="term" value="F:tRNA dimethylallyltransferase activity"/>
    <property type="evidence" value="ECO:0007669"/>
    <property type="project" value="UniProtKB-UniRule"/>
</dbReference>
<dbReference type="GO" id="GO:0006400">
    <property type="term" value="P:tRNA modification"/>
    <property type="evidence" value="ECO:0007669"/>
    <property type="project" value="TreeGrafter"/>
</dbReference>
<dbReference type="Gene3D" id="1.10.20.140">
    <property type="match status" value="1"/>
</dbReference>
<dbReference type="Gene3D" id="3.40.50.300">
    <property type="entry name" value="P-loop containing nucleotide triphosphate hydrolases"/>
    <property type="match status" value="1"/>
</dbReference>
<dbReference type="HAMAP" id="MF_00185">
    <property type="entry name" value="IPP_trans"/>
    <property type="match status" value="1"/>
</dbReference>
<dbReference type="InterPro" id="IPR039657">
    <property type="entry name" value="Dimethylallyltransferase"/>
</dbReference>
<dbReference type="InterPro" id="IPR018022">
    <property type="entry name" value="IPT"/>
</dbReference>
<dbReference type="InterPro" id="IPR027417">
    <property type="entry name" value="P-loop_NTPase"/>
</dbReference>
<dbReference type="NCBIfam" id="TIGR00174">
    <property type="entry name" value="miaA"/>
    <property type="match status" value="1"/>
</dbReference>
<dbReference type="PANTHER" id="PTHR11088">
    <property type="entry name" value="TRNA DIMETHYLALLYLTRANSFERASE"/>
    <property type="match status" value="1"/>
</dbReference>
<dbReference type="PANTHER" id="PTHR11088:SF60">
    <property type="entry name" value="TRNA DIMETHYLALLYLTRANSFERASE"/>
    <property type="match status" value="1"/>
</dbReference>
<dbReference type="Pfam" id="PF01715">
    <property type="entry name" value="IPPT"/>
    <property type="match status" value="1"/>
</dbReference>
<dbReference type="SUPFAM" id="SSF52540">
    <property type="entry name" value="P-loop containing nucleoside triphosphate hydrolases"/>
    <property type="match status" value="1"/>
</dbReference>
<accession>Q3Z8H3</accession>
<gene>
    <name evidence="1" type="primary">miaA</name>
    <name type="ordered locus">DET0741</name>
</gene>